<organism>
    <name type="scientific">Pseudarthrobacter chlorophenolicus (strain ATCC 700700 / DSM 12829 / CIP 107037 / JCM 12360 / KCTC 9906 / NCIMB 13794 / A6)</name>
    <name type="common">Arthrobacter chlorophenolicus</name>
    <dbReference type="NCBI Taxonomy" id="452863"/>
    <lineage>
        <taxon>Bacteria</taxon>
        <taxon>Bacillati</taxon>
        <taxon>Actinomycetota</taxon>
        <taxon>Actinomycetes</taxon>
        <taxon>Micrococcales</taxon>
        <taxon>Micrococcaceae</taxon>
        <taxon>Pseudarthrobacter</taxon>
    </lineage>
</organism>
<feature type="chain" id="PRO_1000122550" description="Aspartyl/glutamyl-tRNA(Asn/Gln) amidotransferase subunit C">
    <location>
        <begin position="1"/>
        <end position="98"/>
    </location>
</feature>
<feature type="region of interest" description="Disordered" evidence="2">
    <location>
        <begin position="75"/>
        <end position="98"/>
    </location>
</feature>
<sequence length="98" mass="10408">MAAINRDDVAHLARLAHIEMSAQELDRMAGELAVIVDSVKSVSEAAGDDVPATSHPIPLTNVFREDVVGHTFSAEQALSGAPDSDDNRFKVPAILDEA</sequence>
<gene>
    <name evidence="1" type="primary">gatC</name>
    <name type="ordered locus">Achl_1349</name>
</gene>
<accession>B8HFK0</accession>
<protein>
    <recommendedName>
        <fullName evidence="1">Aspartyl/glutamyl-tRNA(Asn/Gln) amidotransferase subunit C</fullName>
        <shortName evidence="1">Asp/Glu-ADT subunit C</shortName>
        <ecNumber evidence="1">6.3.5.-</ecNumber>
    </recommendedName>
</protein>
<dbReference type="EC" id="6.3.5.-" evidence="1"/>
<dbReference type="EMBL" id="CP001341">
    <property type="protein sequence ID" value="ACL39339.1"/>
    <property type="molecule type" value="Genomic_DNA"/>
</dbReference>
<dbReference type="RefSeq" id="WP_015936562.1">
    <property type="nucleotide sequence ID" value="NC_011886.1"/>
</dbReference>
<dbReference type="SMR" id="B8HFK0"/>
<dbReference type="STRING" id="452863.Achl_1349"/>
<dbReference type="KEGG" id="ach:Achl_1349"/>
<dbReference type="eggNOG" id="COG0721">
    <property type="taxonomic scope" value="Bacteria"/>
</dbReference>
<dbReference type="HOGENOM" id="CLU_105899_1_0_11"/>
<dbReference type="OrthoDB" id="5295223at2"/>
<dbReference type="Proteomes" id="UP000002505">
    <property type="component" value="Chromosome"/>
</dbReference>
<dbReference type="GO" id="GO:0050566">
    <property type="term" value="F:asparaginyl-tRNA synthase (glutamine-hydrolyzing) activity"/>
    <property type="evidence" value="ECO:0007669"/>
    <property type="project" value="RHEA"/>
</dbReference>
<dbReference type="GO" id="GO:0005524">
    <property type="term" value="F:ATP binding"/>
    <property type="evidence" value="ECO:0007669"/>
    <property type="project" value="UniProtKB-KW"/>
</dbReference>
<dbReference type="GO" id="GO:0050567">
    <property type="term" value="F:glutaminyl-tRNA synthase (glutamine-hydrolyzing) activity"/>
    <property type="evidence" value="ECO:0007669"/>
    <property type="project" value="UniProtKB-UniRule"/>
</dbReference>
<dbReference type="GO" id="GO:0006450">
    <property type="term" value="P:regulation of translational fidelity"/>
    <property type="evidence" value="ECO:0007669"/>
    <property type="project" value="InterPro"/>
</dbReference>
<dbReference type="GO" id="GO:0006412">
    <property type="term" value="P:translation"/>
    <property type="evidence" value="ECO:0007669"/>
    <property type="project" value="UniProtKB-UniRule"/>
</dbReference>
<dbReference type="Gene3D" id="1.10.20.60">
    <property type="entry name" value="Glu-tRNAGln amidotransferase C subunit, N-terminal domain"/>
    <property type="match status" value="1"/>
</dbReference>
<dbReference type="HAMAP" id="MF_00122">
    <property type="entry name" value="GatC"/>
    <property type="match status" value="1"/>
</dbReference>
<dbReference type="InterPro" id="IPR036113">
    <property type="entry name" value="Asp/Glu-ADT_sf_sub_c"/>
</dbReference>
<dbReference type="InterPro" id="IPR003837">
    <property type="entry name" value="GatC"/>
</dbReference>
<dbReference type="NCBIfam" id="TIGR00135">
    <property type="entry name" value="gatC"/>
    <property type="match status" value="1"/>
</dbReference>
<dbReference type="Pfam" id="PF02686">
    <property type="entry name" value="GatC"/>
    <property type="match status" value="1"/>
</dbReference>
<dbReference type="SUPFAM" id="SSF141000">
    <property type="entry name" value="Glu-tRNAGln amidotransferase C subunit"/>
    <property type="match status" value="1"/>
</dbReference>
<evidence type="ECO:0000255" key="1">
    <source>
        <dbReference type="HAMAP-Rule" id="MF_00122"/>
    </source>
</evidence>
<evidence type="ECO:0000256" key="2">
    <source>
        <dbReference type="SAM" id="MobiDB-lite"/>
    </source>
</evidence>
<keyword id="KW-0067">ATP-binding</keyword>
<keyword id="KW-0436">Ligase</keyword>
<keyword id="KW-0547">Nucleotide-binding</keyword>
<keyword id="KW-0648">Protein biosynthesis</keyword>
<proteinExistence type="inferred from homology"/>
<reference key="1">
    <citation type="submission" date="2009-01" db="EMBL/GenBank/DDBJ databases">
        <title>Complete sequence of chromosome of Arthrobacter chlorophenolicus A6.</title>
        <authorList>
            <consortium name="US DOE Joint Genome Institute"/>
            <person name="Lucas S."/>
            <person name="Copeland A."/>
            <person name="Lapidus A."/>
            <person name="Glavina del Rio T."/>
            <person name="Tice H."/>
            <person name="Bruce D."/>
            <person name="Goodwin L."/>
            <person name="Pitluck S."/>
            <person name="Goltsman E."/>
            <person name="Clum A."/>
            <person name="Larimer F."/>
            <person name="Land M."/>
            <person name="Hauser L."/>
            <person name="Kyrpides N."/>
            <person name="Mikhailova N."/>
            <person name="Jansson J."/>
            <person name="Richardson P."/>
        </authorList>
    </citation>
    <scope>NUCLEOTIDE SEQUENCE [LARGE SCALE GENOMIC DNA]</scope>
    <source>
        <strain>ATCC 700700 / DSM 12829 / CIP 107037 / JCM 12360 / KCTC 9906 / NCIMB 13794 / A6</strain>
    </source>
</reference>
<name>GATC_PSECP</name>
<comment type="function">
    <text evidence="1">Allows the formation of correctly charged Asn-tRNA(Asn) or Gln-tRNA(Gln) through the transamidation of misacylated Asp-tRNA(Asn) or Glu-tRNA(Gln) in organisms which lack either or both of asparaginyl-tRNA or glutaminyl-tRNA synthetases. The reaction takes place in the presence of glutamine and ATP through an activated phospho-Asp-tRNA(Asn) or phospho-Glu-tRNA(Gln).</text>
</comment>
<comment type="catalytic activity">
    <reaction evidence="1">
        <text>L-glutamyl-tRNA(Gln) + L-glutamine + ATP + H2O = L-glutaminyl-tRNA(Gln) + L-glutamate + ADP + phosphate + H(+)</text>
        <dbReference type="Rhea" id="RHEA:17521"/>
        <dbReference type="Rhea" id="RHEA-COMP:9681"/>
        <dbReference type="Rhea" id="RHEA-COMP:9684"/>
        <dbReference type="ChEBI" id="CHEBI:15377"/>
        <dbReference type="ChEBI" id="CHEBI:15378"/>
        <dbReference type="ChEBI" id="CHEBI:29985"/>
        <dbReference type="ChEBI" id="CHEBI:30616"/>
        <dbReference type="ChEBI" id="CHEBI:43474"/>
        <dbReference type="ChEBI" id="CHEBI:58359"/>
        <dbReference type="ChEBI" id="CHEBI:78520"/>
        <dbReference type="ChEBI" id="CHEBI:78521"/>
        <dbReference type="ChEBI" id="CHEBI:456216"/>
    </reaction>
</comment>
<comment type="catalytic activity">
    <reaction evidence="1">
        <text>L-aspartyl-tRNA(Asn) + L-glutamine + ATP + H2O = L-asparaginyl-tRNA(Asn) + L-glutamate + ADP + phosphate + 2 H(+)</text>
        <dbReference type="Rhea" id="RHEA:14513"/>
        <dbReference type="Rhea" id="RHEA-COMP:9674"/>
        <dbReference type="Rhea" id="RHEA-COMP:9677"/>
        <dbReference type="ChEBI" id="CHEBI:15377"/>
        <dbReference type="ChEBI" id="CHEBI:15378"/>
        <dbReference type="ChEBI" id="CHEBI:29985"/>
        <dbReference type="ChEBI" id="CHEBI:30616"/>
        <dbReference type="ChEBI" id="CHEBI:43474"/>
        <dbReference type="ChEBI" id="CHEBI:58359"/>
        <dbReference type="ChEBI" id="CHEBI:78515"/>
        <dbReference type="ChEBI" id="CHEBI:78516"/>
        <dbReference type="ChEBI" id="CHEBI:456216"/>
    </reaction>
</comment>
<comment type="subunit">
    <text evidence="1">Heterotrimer of A, B and C subunits.</text>
</comment>
<comment type="similarity">
    <text evidence="1">Belongs to the GatC family.</text>
</comment>